<comment type="function">
    <text evidence="1">Hydrolyzes ribosome-free peptidyl-tRNAs (with 1 or more amino acids incorporated), which drop off the ribosome during protein synthesis, or as a result of ribosome stalling.</text>
</comment>
<comment type="function">
    <text evidence="1">Catalyzes the release of premature peptidyl moieties from peptidyl-tRNA molecules trapped in stalled 50S ribosomal subunits, and thus maintains levels of free tRNAs and 50S ribosomes.</text>
</comment>
<comment type="catalytic activity">
    <reaction evidence="1">
        <text>an N-acyl-L-alpha-aminoacyl-tRNA + H2O = an N-acyl-L-amino acid + a tRNA + H(+)</text>
        <dbReference type="Rhea" id="RHEA:54448"/>
        <dbReference type="Rhea" id="RHEA-COMP:10123"/>
        <dbReference type="Rhea" id="RHEA-COMP:13883"/>
        <dbReference type="ChEBI" id="CHEBI:15377"/>
        <dbReference type="ChEBI" id="CHEBI:15378"/>
        <dbReference type="ChEBI" id="CHEBI:59874"/>
        <dbReference type="ChEBI" id="CHEBI:78442"/>
        <dbReference type="ChEBI" id="CHEBI:138191"/>
        <dbReference type="EC" id="3.1.1.29"/>
    </reaction>
</comment>
<comment type="subunit">
    <text evidence="1">Monomer.</text>
</comment>
<comment type="subcellular location">
    <subcellularLocation>
        <location evidence="1">Cytoplasm</location>
    </subcellularLocation>
</comment>
<comment type="similarity">
    <text evidence="1">Belongs to the PTH family.</text>
</comment>
<protein>
    <recommendedName>
        <fullName evidence="1">Peptidyl-tRNA hydrolase</fullName>
        <shortName evidence="1">Pth</shortName>
        <ecNumber evidence="1">3.1.1.29</ecNumber>
    </recommendedName>
</protein>
<feature type="chain" id="PRO_0000187712" description="Peptidyl-tRNA hydrolase">
    <location>
        <begin position="1"/>
        <end position="181"/>
    </location>
</feature>
<feature type="active site" description="Proton acceptor" evidence="1">
    <location>
        <position position="19"/>
    </location>
</feature>
<feature type="binding site" evidence="1">
    <location>
        <position position="14"/>
    </location>
    <ligand>
        <name>tRNA</name>
        <dbReference type="ChEBI" id="CHEBI:17843"/>
    </ligand>
</feature>
<feature type="binding site" evidence="1">
    <location>
        <position position="62"/>
    </location>
    <ligand>
        <name>tRNA</name>
        <dbReference type="ChEBI" id="CHEBI:17843"/>
    </ligand>
</feature>
<feature type="binding site" evidence="1">
    <location>
        <position position="64"/>
    </location>
    <ligand>
        <name>tRNA</name>
        <dbReference type="ChEBI" id="CHEBI:17843"/>
    </ligand>
</feature>
<feature type="binding site" evidence="1">
    <location>
        <position position="108"/>
    </location>
    <ligand>
        <name>tRNA</name>
        <dbReference type="ChEBI" id="CHEBI:17843"/>
    </ligand>
</feature>
<feature type="site" description="Discriminates between blocked and unblocked aminoacyl-tRNA" evidence="1">
    <location>
        <position position="9"/>
    </location>
</feature>
<feature type="site" description="Stabilizes the basic form of H active site to accept a proton" evidence="1">
    <location>
        <position position="87"/>
    </location>
</feature>
<evidence type="ECO:0000255" key="1">
    <source>
        <dbReference type="HAMAP-Rule" id="MF_00083"/>
    </source>
</evidence>
<proteinExistence type="inferred from homology"/>
<name>PTH_CAMJE</name>
<reference key="1">
    <citation type="journal article" date="2000" name="Nature">
        <title>The genome sequence of the food-borne pathogen Campylobacter jejuni reveals hypervariable sequences.</title>
        <authorList>
            <person name="Parkhill J."/>
            <person name="Wren B.W."/>
            <person name="Mungall K.L."/>
            <person name="Ketley J.M."/>
            <person name="Churcher C.M."/>
            <person name="Basham D."/>
            <person name="Chillingworth T."/>
            <person name="Davies R.M."/>
            <person name="Feltwell T."/>
            <person name="Holroyd S."/>
            <person name="Jagels K."/>
            <person name="Karlyshev A.V."/>
            <person name="Moule S."/>
            <person name="Pallen M.J."/>
            <person name="Penn C.W."/>
            <person name="Quail M.A."/>
            <person name="Rajandream M.A."/>
            <person name="Rutherford K.M."/>
            <person name="van Vliet A.H.M."/>
            <person name="Whitehead S."/>
            <person name="Barrell B.G."/>
        </authorList>
    </citation>
    <scope>NUCLEOTIDE SEQUENCE [LARGE SCALE GENOMIC DNA]</scope>
    <source>
        <strain>ATCC 700819 / NCTC 11168</strain>
    </source>
</reference>
<sequence>MILVVGLGNIGVEYENTRHNVGFMLIDLLLKESNFTNLTNSKFKGELFKIGSSLLLLKPSTYMNNSGLSVKAVNDFYKCERMIVIHDDIDINLGALRFKKGGSSGGHNGLKSIDTLCGNDYERVRIGVGKGENVISHVLGKFKSEEEITLSKVLEHAKKALLELIENDDLSAISSKYSLKA</sequence>
<gene>
    <name evidence="1" type="primary">pth</name>
    <name type="ordered locus">Cj0312</name>
</gene>
<organism>
    <name type="scientific">Campylobacter jejuni subsp. jejuni serotype O:2 (strain ATCC 700819 / NCTC 11168)</name>
    <dbReference type="NCBI Taxonomy" id="192222"/>
    <lineage>
        <taxon>Bacteria</taxon>
        <taxon>Pseudomonadati</taxon>
        <taxon>Campylobacterota</taxon>
        <taxon>Epsilonproteobacteria</taxon>
        <taxon>Campylobacterales</taxon>
        <taxon>Campylobacteraceae</taxon>
        <taxon>Campylobacter</taxon>
    </lineage>
</organism>
<keyword id="KW-0963">Cytoplasm</keyword>
<keyword id="KW-0378">Hydrolase</keyword>
<keyword id="KW-1185">Reference proteome</keyword>
<keyword id="KW-0694">RNA-binding</keyword>
<keyword id="KW-0820">tRNA-binding</keyword>
<accession>Q9PII7</accession>
<accession>Q0PBJ7</accession>
<dbReference type="EC" id="3.1.1.29" evidence="1"/>
<dbReference type="EMBL" id="AL111168">
    <property type="protein sequence ID" value="CAL34463.1"/>
    <property type="molecule type" value="Genomic_DNA"/>
</dbReference>
<dbReference type="PIR" id="D81450">
    <property type="entry name" value="D81450"/>
</dbReference>
<dbReference type="RefSeq" id="WP_002858659.1">
    <property type="nucleotide sequence ID" value="NZ_SZUC01000004.1"/>
</dbReference>
<dbReference type="RefSeq" id="YP_002343750.1">
    <property type="nucleotide sequence ID" value="NC_002163.1"/>
</dbReference>
<dbReference type="SMR" id="Q9PII7"/>
<dbReference type="IntAct" id="Q9PII7">
    <property type="interactions" value="1"/>
</dbReference>
<dbReference type="STRING" id="192222.Cj0312"/>
<dbReference type="PaxDb" id="192222-Cj0312"/>
<dbReference type="EnsemblBacteria" id="CAL34463">
    <property type="protein sequence ID" value="CAL34463"/>
    <property type="gene ID" value="Cj0312"/>
</dbReference>
<dbReference type="GeneID" id="904636"/>
<dbReference type="KEGG" id="cje:Cj0312"/>
<dbReference type="PATRIC" id="fig|192222.6.peg.304"/>
<dbReference type="eggNOG" id="COG0193">
    <property type="taxonomic scope" value="Bacteria"/>
</dbReference>
<dbReference type="HOGENOM" id="CLU_062456_4_1_7"/>
<dbReference type="OrthoDB" id="9800507at2"/>
<dbReference type="Proteomes" id="UP000000799">
    <property type="component" value="Chromosome"/>
</dbReference>
<dbReference type="GO" id="GO:0005737">
    <property type="term" value="C:cytoplasm"/>
    <property type="evidence" value="ECO:0007669"/>
    <property type="project" value="UniProtKB-SubCell"/>
</dbReference>
<dbReference type="GO" id="GO:0004045">
    <property type="term" value="F:peptidyl-tRNA hydrolase activity"/>
    <property type="evidence" value="ECO:0007669"/>
    <property type="project" value="UniProtKB-UniRule"/>
</dbReference>
<dbReference type="GO" id="GO:0000049">
    <property type="term" value="F:tRNA binding"/>
    <property type="evidence" value="ECO:0007669"/>
    <property type="project" value="UniProtKB-UniRule"/>
</dbReference>
<dbReference type="GO" id="GO:0006515">
    <property type="term" value="P:protein quality control for misfolded or incompletely synthesized proteins"/>
    <property type="evidence" value="ECO:0007669"/>
    <property type="project" value="UniProtKB-UniRule"/>
</dbReference>
<dbReference type="GO" id="GO:0072344">
    <property type="term" value="P:rescue of stalled ribosome"/>
    <property type="evidence" value="ECO:0007669"/>
    <property type="project" value="UniProtKB-UniRule"/>
</dbReference>
<dbReference type="CDD" id="cd00462">
    <property type="entry name" value="PTH"/>
    <property type="match status" value="1"/>
</dbReference>
<dbReference type="FunFam" id="3.40.50.1470:FF:000001">
    <property type="entry name" value="Peptidyl-tRNA hydrolase"/>
    <property type="match status" value="1"/>
</dbReference>
<dbReference type="Gene3D" id="3.40.50.1470">
    <property type="entry name" value="Peptidyl-tRNA hydrolase"/>
    <property type="match status" value="1"/>
</dbReference>
<dbReference type="HAMAP" id="MF_00083">
    <property type="entry name" value="Pept_tRNA_hydro_bact"/>
    <property type="match status" value="1"/>
</dbReference>
<dbReference type="InterPro" id="IPR001328">
    <property type="entry name" value="Pept_tRNA_hydro"/>
</dbReference>
<dbReference type="InterPro" id="IPR018171">
    <property type="entry name" value="Pept_tRNA_hydro_CS"/>
</dbReference>
<dbReference type="InterPro" id="IPR036416">
    <property type="entry name" value="Pept_tRNA_hydro_sf"/>
</dbReference>
<dbReference type="NCBIfam" id="TIGR00447">
    <property type="entry name" value="pth"/>
    <property type="match status" value="1"/>
</dbReference>
<dbReference type="PANTHER" id="PTHR17224">
    <property type="entry name" value="PEPTIDYL-TRNA HYDROLASE"/>
    <property type="match status" value="1"/>
</dbReference>
<dbReference type="PANTHER" id="PTHR17224:SF1">
    <property type="entry name" value="PEPTIDYL-TRNA HYDROLASE"/>
    <property type="match status" value="1"/>
</dbReference>
<dbReference type="Pfam" id="PF01195">
    <property type="entry name" value="Pept_tRNA_hydro"/>
    <property type="match status" value="1"/>
</dbReference>
<dbReference type="SUPFAM" id="SSF53178">
    <property type="entry name" value="Peptidyl-tRNA hydrolase-like"/>
    <property type="match status" value="1"/>
</dbReference>
<dbReference type="PROSITE" id="PS01195">
    <property type="entry name" value="PEPT_TRNA_HYDROL_1"/>
    <property type="match status" value="1"/>
</dbReference>
<dbReference type="PROSITE" id="PS01196">
    <property type="entry name" value="PEPT_TRNA_HYDROL_2"/>
    <property type="match status" value="1"/>
</dbReference>